<sequence length="843" mass="96340">MAKPLTDGERRKQISVRGLAGLGDVAEVRKSFNRHLHFTLVKDRNVATRRDYYLALAHTVRDHLVGRWIRTQQRYYERDPKRIYYLSLEFYMGRTLQNTMVNLGLQNACDEAIYQLGLDLEELEEIEEDAGLGNGGLGRLAACFLDSMATLGLAAYGYGIRYEFGIFNQKIVNGWQVEEADDWLRYGNPWEKARPEYMLPVHFYGRVEHSPEGVRWLDTQVVLAMPYDTPVPGYKNDTVNTMRLWSAKAPNDFKLHDFNVGGYIEAVLDRNLAENISRVLYPNDNFFEGKELRLKQEYFVVAATLQDIIRRFKSSKFGCRDPVRTSFETFPDKVAIQLNDTHPALAIPELMRILVDVEKVDWDKAWEITKKTCAYTNHTVLPEALERWPVSMFEKLLPRHLDIIYAINQRHLDHVAALFPGDVDRLRRMSVIEEGDCKRINMAHLCVIGSHAVNGVARIHSEIVRQSVFKDFYELEPEKFQNKTNGITPRRWLLLCNPGLAETIVERIGEGFLTDLSQLKKLLPLVGDEALIRDVAQVKQENKVKFSAFLEKQYGVKVNPSSMFDVHVKRIHEYKRQLLNCLHVVTLYNRIKKDPTQAFVPRTVMIGGKAAPGYHMAKKIIKLVTSIGNIVNHDPIVGDRLKVIFLENYRVSLAEKVIPAADLSQQISTAGTEASGTGNMKFMLNGALTIGTMDGANVEMAEEAGAENLFIFGLRVEDVEALDRKGYNAHEYYDRLPELRQAVDQINGGFFSPREPDCFKDVVNMLLNHDRFKVFADYEAYVACQARVDQLYRNPKEWTKKVIRNIACSGKFSSDRTITEYAHDIWGAEPPALQTPPPSLPRD</sequence>
<reference key="1">
    <citation type="submission" date="2005-10" db="EMBL/GenBank/DDBJ databases">
        <authorList>
            <consortium name="NIH - Mammalian Gene Collection (MGC) project"/>
        </authorList>
    </citation>
    <scope>NUCLEOTIDE SEQUENCE [LARGE SCALE MRNA]</scope>
    <source>
        <strain>Hereford</strain>
        <tissue>Thymus</tissue>
    </source>
</reference>
<gene>
    <name type="primary">PYGB</name>
</gene>
<dbReference type="EC" id="2.4.1.1"/>
<dbReference type="EMBL" id="BC107536">
    <property type="protein sequence ID" value="AAI07537.1"/>
    <property type="molecule type" value="mRNA"/>
</dbReference>
<dbReference type="RefSeq" id="NP_001030347.1">
    <property type="nucleotide sequence ID" value="NM_001035270.2"/>
</dbReference>
<dbReference type="SMR" id="Q3B7M9"/>
<dbReference type="FunCoup" id="Q3B7M9">
    <property type="interactions" value="1481"/>
</dbReference>
<dbReference type="STRING" id="9913.ENSBTAP00000006069"/>
<dbReference type="CAZy" id="GT35">
    <property type="family name" value="Glycosyltransferase Family 35"/>
</dbReference>
<dbReference type="PaxDb" id="9913-ENSBTAP00000006069"/>
<dbReference type="GeneID" id="505560"/>
<dbReference type="KEGG" id="bta:505560"/>
<dbReference type="CTD" id="5834"/>
<dbReference type="eggNOG" id="KOG2099">
    <property type="taxonomic scope" value="Eukaryota"/>
</dbReference>
<dbReference type="InParanoid" id="Q3B7M9"/>
<dbReference type="OrthoDB" id="9215500at2759"/>
<dbReference type="Proteomes" id="UP000009136">
    <property type="component" value="Unplaced"/>
</dbReference>
<dbReference type="GO" id="GO:0005737">
    <property type="term" value="C:cytoplasm"/>
    <property type="evidence" value="ECO:0000318"/>
    <property type="project" value="GO_Central"/>
</dbReference>
<dbReference type="GO" id="GO:0008184">
    <property type="term" value="F:glycogen phosphorylase activity"/>
    <property type="evidence" value="ECO:0000318"/>
    <property type="project" value="GO_Central"/>
</dbReference>
<dbReference type="GO" id="GO:0030170">
    <property type="term" value="F:pyridoxal phosphate binding"/>
    <property type="evidence" value="ECO:0000318"/>
    <property type="project" value="GO_Central"/>
</dbReference>
<dbReference type="GO" id="GO:0005980">
    <property type="term" value="P:glycogen catabolic process"/>
    <property type="evidence" value="ECO:0000318"/>
    <property type="project" value="GO_Central"/>
</dbReference>
<dbReference type="CDD" id="cd04300">
    <property type="entry name" value="GT35_Glycogen_Phosphorylase"/>
    <property type="match status" value="1"/>
</dbReference>
<dbReference type="FunFam" id="3.40.50.2000:FF:000005">
    <property type="entry name" value="Alpha-1,4 glucan phosphorylase"/>
    <property type="match status" value="1"/>
</dbReference>
<dbReference type="FunFam" id="3.40.50.2000:FF:000153">
    <property type="entry name" value="Alpha-1,4 glucan phosphorylase"/>
    <property type="match status" value="1"/>
</dbReference>
<dbReference type="FunFam" id="3.40.50.2000:FF:000197">
    <property type="entry name" value="Alpha-1,4 glucan phosphorylase"/>
    <property type="match status" value="1"/>
</dbReference>
<dbReference type="Gene3D" id="3.40.50.2000">
    <property type="entry name" value="Glycogen Phosphorylase B"/>
    <property type="match status" value="2"/>
</dbReference>
<dbReference type="InterPro" id="IPR011833">
    <property type="entry name" value="Glycg_phsphrylas"/>
</dbReference>
<dbReference type="InterPro" id="IPR000811">
    <property type="entry name" value="Glyco_trans_35"/>
</dbReference>
<dbReference type="InterPro" id="IPR035090">
    <property type="entry name" value="Pyridoxal_P_attach_site"/>
</dbReference>
<dbReference type="NCBIfam" id="TIGR02093">
    <property type="entry name" value="P_ylase"/>
    <property type="match status" value="1"/>
</dbReference>
<dbReference type="PANTHER" id="PTHR11468">
    <property type="entry name" value="GLYCOGEN PHOSPHORYLASE"/>
    <property type="match status" value="1"/>
</dbReference>
<dbReference type="PANTHER" id="PTHR11468:SF29">
    <property type="entry name" value="GLYCOGEN PHOSPHORYLASE, BRAIN FORM"/>
    <property type="match status" value="1"/>
</dbReference>
<dbReference type="Pfam" id="PF00343">
    <property type="entry name" value="Phosphorylase"/>
    <property type="match status" value="1"/>
</dbReference>
<dbReference type="PIRSF" id="PIRSF000460">
    <property type="entry name" value="Pprylas_GlgP"/>
    <property type="match status" value="1"/>
</dbReference>
<dbReference type="SUPFAM" id="SSF53756">
    <property type="entry name" value="UDP-Glycosyltransferase/glycogen phosphorylase"/>
    <property type="match status" value="1"/>
</dbReference>
<dbReference type="PROSITE" id="PS00102">
    <property type="entry name" value="PHOSPHORYLASE"/>
    <property type="match status" value="1"/>
</dbReference>
<accession>Q3B7M9</accession>
<keyword id="KW-0007">Acetylation</keyword>
<keyword id="KW-0021">Allosteric enzyme</keyword>
<keyword id="KW-0119">Carbohydrate metabolism</keyword>
<keyword id="KW-0321">Glycogen metabolism</keyword>
<keyword id="KW-0328">Glycosyltransferase</keyword>
<keyword id="KW-0597">Phosphoprotein</keyword>
<keyword id="KW-0663">Pyridoxal phosphate</keyword>
<keyword id="KW-1185">Reference proteome</keyword>
<keyword id="KW-0808">Transferase</keyword>
<feature type="initiator methionine" description="Removed" evidence="2">
    <location>
        <position position="1"/>
    </location>
</feature>
<feature type="chain" id="PRO_0000239657" description="Glycogen phosphorylase, brain form">
    <location>
        <begin position="2"/>
        <end position="843"/>
    </location>
</feature>
<feature type="region of interest" description="Pyridoxal 5'-phosphate" evidence="2">
    <location>
        <begin position="677"/>
        <end position="678"/>
    </location>
</feature>
<feature type="binding site" evidence="2">
    <location>
        <position position="43"/>
    </location>
    <ligand>
        <name>AMP</name>
        <dbReference type="ChEBI" id="CHEBI:456215"/>
        <note>ligand shared between dimeric partners</note>
    </ligand>
</feature>
<feature type="binding site" description="in other chain" evidence="2">
    <location>
        <position position="197"/>
    </location>
    <ligand>
        <name>AMP</name>
        <dbReference type="ChEBI" id="CHEBI:456215"/>
        <note>ligand shared between dimeric partners</note>
    </ligand>
</feature>
<feature type="binding site" description="in other chain" evidence="2">
    <location>
        <position position="310"/>
    </location>
    <ligand>
        <name>AMP</name>
        <dbReference type="ChEBI" id="CHEBI:456215"/>
        <note>ligand shared between dimeric partners</note>
    </ligand>
</feature>
<feature type="binding site" evidence="2">
    <location>
        <position position="569"/>
    </location>
    <ligand>
        <name>pyridoxal 5'-phosphate</name>
        <dbReference type="ChEBI" id="CHEBI:597326"/>
    </ligand>
</feature>
<feature type="site" description="Participates in a stacking interaction with the adenine ring of AMP" evidence="2">
    <location>
        <position position="76"/>
    </location>
</feature>
<feature type="site" description="Involved in the association of subunits" evidence="1">
    <location>
        <position position="109"/>
    </location>
</feature>
<feature type="site" description="Involved in the association of subunits" evidence="1">
    <location>
        <position position="143"/>
    </location>
</feature>
<feature type="site" description="May be involved in allosteric control" evidence="1">
    <location>
        <position position="156"/>
    </location>
</feature>
<feature type="modified residue" description="N-acetylalanine" evidence="2">
    <location>
        <position position="2"/>
    </location>
</feature>
<feature type="modified residue" description="Phosphoserine; by PHK; in form phosphorylase A" evidence="4">
    <location>
        <position position="15"/>
    </location>
</feature>
<feature type="modified residue" description="Phosphotyrosine" evidence="5">
    <location>
        <position position="197"/>
    </location>
</feature>
<feature type="modified residue" description="Phosphotyrosine" evidence="5">
    <location>
        <position position="473"/>
    </location>
</feature>
<feature type="modified residue" description="N6-(pyridoxal phosphate)lysine" evidence="2">
    <location>
        <position position="681"/>
    </location>
</feature>
<name>PYGB_BOVIN</name>
<organism>
    <name type="scientific">Bos taurus</name>
    <name type="common">Bovine</name>
    <dbReference type="NCBI Taxonomy" id="9913"/>
    <lineage>
        <taxon>Eukaryota</taxon>
        <taxon>Metazoa</taxon>
        <taxon>Chordata</taxon>
        <taxon>Craniata</taxon>
        <taxon>Vertebrata</taxon>
        <taxon>Euteleostomi</taxon>
        <taxon>Mammalia</taxon>
        <taxon>Eutheria</taxon>
        <taxon>Laurasiatheria</taxon>
        <taxon>Artiodactyla</taxon>
        <taxon>Ruminantia</taxon>
        <taxon>Pecora</taxon>
        <taxon>Bovidae</taxon>
        <taxon>Bovinae</taxon>
        <taxon>Bos</taxon>
    </lineage>
</organism>
<comment type="function">
    <text evidence="2">Glycogen phosphorylase that regulates glycogen mobilization. Phosphorylase is an important allosteric enzyme in carbohydrate metabolism. Enzymes from different sources differ in their regulatory mechanisms and in their natural substrates. However, all known phosphorylases share catalytic and structural properties.</text>
</comment>
<comment type="catalytic activity">
    <reaction>
        <text>[(1-&gt;4)-alpha-D-glucosyl](n) + phosphate = [(1-&gt;4)-alpha-D-glucosyl](n-1) + alpha-D-glucose 1-phosphate</text>
        <dbReference type="Rhea" id="RHEA:41732"/>
        <dbReference type="Rhea" id="RHEA-COMP:9584"/>
        <dbReference type="Rhea" id="RHEA-COMP:9586"/>
        <dbReference type="ChEBI" id="CHEBI:15444"/>
        <dbReference type="ChEBI" id="CHEBI:43474"/>
        <dbReference type="ChEBI" id="CHEBI:58601"/>
        <dbReference type="EC" id="2.4.1.1"/>
    </reaction>
</comment>
<comment type="cofactor">
    <cofactor evidence="1">
        <name>pyridoxal 5'-phosphate</name>
        <dbReference type="ChEBI" id="CHEBI:597326"/>
    </cofactor>
</comment>
<comment type="activity regulation">
    <text evidence="2">Activity of phosphorylase is controlled both by allosteric means (through the non-covalent binding of metabolites) and by covalent modification. Thus AMP allosterically activates, whereas ATP, ADP, and glucose-6-phosphate allosterically inhibit, phosphorylase B (By similarity).</text>
</comment>
<comment type="subunit">
    <text evidence="2">Homodimer. Dimers associate into a tetramer to form the enzymatically active phosphorylase A (By similarity).</text>
</comment>
<comment type="PTM">
    <text evidence="3">Phosphorylation of Ser-15 converts phosphorylase B (unphosphorylated) to phosphorylase A.</text>
</comment>
<comment type="similarity">
    <text evidence="6">Belongs to the glycogen phosphorylase family.</text>
</comment>
<protein>
    <recommendedName>
        <fullName>Glycogen phosphorylase, brain form</fullName>
        <ecNumber>2.4.1.1</ecNumber>
    </recommendedName>
</protein>
<proteinExistence type="evidence at transcript level"/>
<evidence type="ECO:0000250" key="1"/>
<evidence type="ECO:0000250" key="2">
    <source>
        <dbReference type="UniProtKB" id="P11216"/>
    </source>
</evidence>
<evidence type="ECO:0000250" key="3">
    <source>
        <dbReference type="UniProtKB" id="P11217"/>
    </source>
</evidence>
<evidence type="ECO:0000250" key="4">
    <source>
        <dbReference type="UniProtKB" id="P53534"/>
    </source>
</evidence>
<evidence type="ECO:0000250" key="5">
    <source>
        <dbReference type="UniProtKB" id="Q8CI94"/>
    </source>
</evidence>
<evidence type="ECO:0000305" key="6"/>